<geneLocation type="chloroplast"/>
<reference key="1">
    <citation type="journal article" date="2004" name="Plant Physiol.">
        <title>A comparison of rice chloroplast genomes.</title>
        <authorList>
            <person name="Tang J."/>
            <person name="Xia H."/>
            <person name="Cao M."/>
            <person name="Zhang X."/>
            <person name="Zeng W."/>
            <person name="Hu S."/>
            <person name="Tong W."/>
            <person name="Wang J."/>
            <person name="Wang J."/>
            <person name="Yu J."/>
            <person name="Yang H."/>
            <person name="Zhu L."/>
        </authorList>
    </citation>
    <scope>NUCLEOTIDE SEQUENCE [LARGE SCALE GENOMIC DNA]</scope>
    <source>
        <strain>cv. PA64s</strain>
    </source>
</reference>
<comment type="function">
    <text evidence="1">NDH shuttles electrons from NAD(P)H:plastoquinone, via FMN and iron-sulfur (Fe-S) centers, to quinones in the photosynthetic chain and possibly in a chloroplast respiratory chain. The immediate electron acceptor for the enzyme in this species is believed to be plastoquinone. Couples the redox reaction to proton translocation, and thus conserves the redox energy in a proton gradient (By similarity).</text>
</comment>
<comment type="catalytic activity">
    <reaction>
        <text>a plastoquinone + NADH + (n+1) H(+)(in) = a plastoquinol + NAD(+) + n H(+)(out)</text>
        <dbReference type="Rhea" id="RHEA:42608"/>
        <dbReference type="Rhea" id="RHEA-COMP:9561"/>
        <dbReference type="Rhea" id="RHEA-COMP:9562"/>
        <dbReference type="ChEBI" id="CHEBI:15378"/>
        <dbReference type="ChEBI" id="CHEBI:17757"/>
        <dbReference type="ChEBI" id="CHEBI:57540"/>
        <dbReference type="ChEBI" id="CHEBI:57945"/>
        <dbReference type="ChEBI" id="CHEBI:62192"/>
    </reaction>
</comment>
<comment type="catalytic activity">
    <reaction>
        <text>a plastoquinone + NADPH + (n+1) H(+)(in) = a plastoquinol + NADP(+) + n H(+)(out)</text>
        <dbReference type="Rhea" id="RHEA:42612"/>
        <dbReference type="Rhea" id="RHEA-COMP:9561"/>
        <dbReference type="Rhea" id="RHEA-COMP:9562"/>
        <dbReference type="ChEBI" id="CHEBI:15378"/>
        <dbReference type="ChEBI" id="CHEBI:17757"/>
        <dbReference type="ChEBI" id="CHEBI:57783"/>
        <dbReference type="ChEBI" id="CHEBI:58349"/>
        <dbReference type="ChEBI" id="CHEBI:62192"/>
    </reaction>
</comment>
<comment type="subunit">
    <text evidence="1">NDH is composed of at least 16 different subunits, 5 of which are encoded in the nucleus.</text>
</comment>
<comment type="subcellular location">
    <subcellularLocation>
        <location evidence="1">Plastid</location>
        <location evidence="1">Chloroplast thylakoid membrane</location>
        <topology evidence="1">Multi-pass membrane protein</topology>
    </subcellularLocation>
</comment>
<comment type="RNA editing">
    <location>
        <position position="158" evidence="1"/>
    </location>
    <location>
        <position position="188" evidence="1"/>
    </location>
    <location>
        <position position="357" evidence="1"/>
    </location>
</comment>
<comment type="similarity">
    <text evidence="3">Belongs to the complex I subunit 1 family.</text>
</comment>
<accession>P0C344</accession>
<gene>
    <name type="primary">ndhA</name>
    <name type="ORF">PA174</name>
</gene>
<evidence type="ECO:0000250" key="1"/>
<evidence type="ECO:0000255" key="2"/>
<evidence type="ECO:0000305" key="3"/>
<name>NU1C_ORYSA</name>
<organism>
    <name type="scientific">Oryza sativa</name>
    <name type="common">Rice</name>
    <dbReference type="NCBI Taxonomy" id="4530"/>
    <lineage>
        <taxon>Eukaryota</taxon>
        <taxon>Viridiplantae</taxon>
        <taxon>Streptophyta</taxon>
        <taxon>Embryophyta</taxon>
        <taxon>Tracheophyta</taxon>
        <taxon>Spermatophyta</taxon>
        <taxon>Magnoliopsida</taxon>
        <taxon>Liliopsida</taxon>
        <taxon>Poales</taxon>
        <taxon>Poaceae</taxon>
        <taxon>BOP clade</taxon>
        <taxon>Oryzoideae</taxon>
        <taxon>Oryzeae</taxon>
        <taxon>Oryzinae</taxon>
        <taxon>Oryza</taxon>
    </lineage>
</organism>
<feature type="chain" id="PRO_0000288688" description="NAD(P)H-quinone oxidoreductase subunit 1, chloroplastic">
    <location>
        <begin position="1"/>
        <end position="362"/>
    </location>
</feature>
<feature type="transmembrane region" description="Helical" evidence="2">
    <location>
        <begin position="27"/>
        <end position="47"/>
    </location>
</feature>
<feature type="transmembrane region" description="Helical" evidence="2">
    <location>
        <begin position="94"/>
        <end position="114"/>
    </location>
</feature>
<feature type="transmembrane region" description="Helical" evidence="2">
    <location>
        <begin position="128"/>
        <end position="148"/>
    </location>
</feature>
<feature type="transmembrane region" description="Helical" evidence="2">
    <location>
        <begin position="164"/>
        <end position="184"/>
    </location>
</feature>
<feature type="transmembrane region" description="Helical" evidence="2">
    <location>
        <begin position="202"/>
        <end position="222"/>
    </location>
</feature>
<feature type="transmembrane region" description="Helical" evidence="2">
    <location>
        <begin position="247"/>
        <end position="267"/>
    </location>
</feature>
<feature type="transmembrane region" description="Helical" evidence="2">
    <location>
        <begin position="303"/>
        <end position="323"/>
    </location>
</feature>
<feature type="transmembrane region" description="Helical" evidence="2">
    <location>
        <begin position="335"/>
        <end position="355"/>
    </location>
</feature>
<protein>
    <recommendedName>
        <fullName>NAD(P)H-quinone oxidoreductase subunit 1, chloroplastic</fullName>
        <ecNumber>7.1.1.-</ecNumber>
    </recommendedName>
    <alternativeName>
        <fullName>NAD(P)H dehydrogenase subunit 1</fullName>
        <shortName>NDH subunit 1</shortName>
    </alternativeName>
    <alternativeName>
        <fullName>NADH-plastoquinone oxidoreductase subunit 1</fullName>
    </alternativeName>
</protein>
<dbReference type="EC" id="7.1.1.-"/>
<dbReference type="EMBL" id="AY522331">
    <property type="status" value="NOT_ANNOTATED_CDS"/>
    <property type="molecule type" value="Genomic_DNA"/>
</dbReference>
<dbReference type="SMR" id="P0C344"/>
<dbReference type="GO" id="GO:0009535">
    <property type="term" value="C:chloroplast thylakoid membrane"/>
    <property type="evidence" value="ECO:0007669"/>
    <property type="project" value="UniProtKB-SubCell"/>
</dbReference>
<dbReference type="GO" id="GO:0009536">
    <property type="term" value="C:plastid"/>
    <property type="evidence" value="ECO:0000305"/>
    <property type="project" value="Gramene"/>
</dbReference>
<dbReference type="GO" id="GO:0003954">
    <property type="term" value="F:NADH dehydrogenase activity"/>
    <property type="evidence" value="ECO:0007669"/>
    <property type="project" value="TreeGrafter"/>
</dbReference>
<dbReference type="GO" id="GO:0016655">
    <property type="term" value="F:oxidoreductase activity, acting on NAD(P)H, quinone or similar compound as acceptor"/>
    <property type="evidence" value="ECO:0007669"/>
    <property type="project" value="UniProtKB-UniRule"/>
</dbReference>
<dbReference type="GO" id="GO:0048038">
    <property type="term" value="F:quinone binding"/>
    <property type="evidence" value="ECO:0007669"/>
    <property type="project" value="UniProtKB-KW"/>
</dbReference>
<dbReference type="GO" id="GO:0009060">
    <property type="term" value="P:aerobic respiration"/>
    <property type="evidence" value="ECO:0007669"/>
    <property type="project" value="TreeGrafter"/>
</dbReference>
<dbReference type="GO" id="GO:0019684">
    <property type="term" value="P:photosynthesis, light reaction"/>
    <property type="evidence" value="ECO:0007669"/>
    <property type="project" value="UniProtKB-UniRule"/>
</dbReference>
<dbReference type="HAMAP" id="MF_01350">
    <property type="entry name" value="NDH1_NuoH"/>
    <property type="match status" value="1"/>
</dbReference>
<dbReference type="InterPro" id="IPR001694">
    <property type="entry name" value="NADH_UbQ_OxRdtase_su1/FPO"/>
</dbReference>
<dbReference type="InterPro" id="IPR018086">
    <property type="entry name" value="NADH_UbQ_OxRdtase_su1_CS"/>
</dbReference>
<dbReference type="NCBIfam" id="NF004741">
    <property type="entry name" value="PRK06076.1-2"/>
    <property type="match status" value="1"/>
</dbReference>
<dbReference type="PANTHER" id="PTHR11432">
    <property type="entry name" value="NADH DEHYDROGENASE SUBUNIT 1"/>
    <property type="match status" value="1"/>
</dbReference>
<dbReference type="PANTHER" id="PTHR11432:SF3">
    <property type="entry name" value="NADH-UBIQUINONE OXIDOREDUCTASE CHAIN 1"/>
    <property type="match status" value="1"/>
</dbReference>
<dbReference type="Pfam" id="PF00146">
    <property type="entry name" value="NADHdh"/>
    <property type="match status" value="1"/>
</dbReference>
<dbReference type="PROSITE" id="PS00667">
    <property type="entry name" value="COMPLEX1_ND1_1"/>
    <property type="match status" value="1"/>
</dbReference>
<dbReference type="PROSITE" id="PS00668">
    <property type="entry name" value="COMPLEX1_ND1_2"/>
    <property type="match status" value="1"/>
</dbReference>
<sequence length="362" mass="40468">MIIDRVQVEAINSFSNLELLKEVYGLIWILPILTLLLGITIEVLVIVWLEREISASIQQRIGPEYAGPLGLLQAIADGTKLLFKEDILPSRGDIPLFSIGPSIAVISILLSFLVIPLGYRFVLADLSIGVFLWIAISSIAPIGLLMAGYSSNNKYSFLGGLRAAAQSISYEIPLTFCVLAISLLSNSLSTVDIVEAQSKYGFFGWNLWRQPIGFLVFLISSLAECERLPFDLPEAEEELVAGYQTEYSGIKYGLFYLVSYLNLLVSSLFVTVLYLGGWNLSIPYISFFGFFQMNKMVGILEMTMSIFITLTKAYLFLFISITIRWTLPRMRMDQLLNLGWKFLLPISLGNLLLTTSFQLVSL</sequence>
<proteinExistence type="inferred from homology"/>
<keyword id="KW-0150">Chloroplast</keyword>
<keyword id="KW-0472">Membrane</keyword>
<keyword id="KW-0520">NAD</keyword>
<keyword id="KW-0521">NADP</keyword>
<keyword id="KW-0934">Plastid</keyword>
<keyword id="KW-0618">Plastoquinone</keyword>
<keyword id="KW-0874">Quinone</keyword>
<keyword id="KW-0691">RNA editing</keyword>
<keyword id="KW-0793">Thylakoid</keyword>
<keyword id="KW-1278">Translocase</keyword>
<keyword id="KW-0812">Transmembrane</keyword>
<keyword id="KW-1133">Transmembrane helix</keyword>